<accession>O15552</accession>
<accession>B0M0J9</accession>
<accession>Q4VAZ3</accession>
<accession>Q4VAZ5</accession>
<accession>Q4VBL5</accession>
<organism>
    <name type="scientific">Homo sapiens</name>
    <name type="common">Human</name>
    <dbReference type="NCBI Taxonomy" id="9606"/>
    <lineage>
        <taxon>Eukaryota</taxon>
        <taxon>Metazoa</taxon>
        <taxon>Chordata</taxon>
        <taxon>Craniata</taxon>
        <taxon>Vertebrata</taxon>
        <taxon>Euteleostomi</taxon>
        <taxon>Mammalia</taxon>
        <taxon>Eutheria</taxon>
        <taxon>Euarchontoglires</taxon>
        <taxon>Primates</taxon>
        <taxon>Haplorrhini</taxon>
        <taxon>Catarrhini</taxon>
        <taxon>Hominidae</taxon>
        <taxon>Homo</taxon>
    </lineage>
</organism>
<proteinExistence type="evidence at protein level"/>
<comment type="function">
    <text evidence="4 5 6 7 9 11 12">G protein-coupled receptor that is activated by a major product of dietary fiber digestion, the short chain fatty acids (SCFAs), and that plays a role in the regulation of whole-body energy homeostasis and in intestinal immunity. In omnivorous mammals, the short chain fatty acids acetate, propionate and butyrate are produced primarily by the gut microbiome that metabolizes dietary fibers. SCFAs serve as a source of energy but also act as signaling molecules. That G protein-coupled receptor is probably coupled to the pertussis toxin-sensitive, G(i/o)-alpha family of G proteins but also to the Gq family (PubMed:12496283, PubMed:12711604, PubMed:23589301). Its activation results in the formation of inositol 1,4,5-trisphosphate, the mobilization of intracellular calcium, the phosphorylation of the MAPK3/ERK1 and MAPK1/ERK2 kinases and the inhibition of intracellular cAMP accumulation. May play a role in glucose homeostasis by regulating the secretion of GLP-1, in response to short-chain fatty acids accumulating in the intestine. May also regulate the production of LEP/Leptin, a hormone acting on the central nervous system to inhibit food intake. Finally, may also regulate whole-body energy homeostasis through adipogenesis regulating both differentiation and lipid storage of adipocytes. In parallel to its role in energy homeostasis, may also mediate the activation of the inflammatory and immune responses by SCFA in the intestine, regulating the rapid production of chemokines and cytokines. May also play a role in the resolution of the inflammatory response and control chemotaxis in neutrophils. In addition to SCFAs, may also be activated by the extracellular lectin FCN1 in a process leading to activation of monocytes and inducing the secretion of interleukin-8/IL-8 in response to the presence of microbes (PubMed:21037097). Among SCFAs, the fatty acids containing less than 6 carbons, the most potent activators are probably acetate, propionate and butyrate (PubMed:12496283, PubMed:12711604). Exhibits a SCFA-independent constitutive G protein-coupled receptor activity (PubMed:23066016).</text>
</comment>
<comment type="subunit">
    <text evidence="9">Interacts with FCN1 (via Fibrinogen C-terminal domain).</text>
</comment>
<comment type="interaction">
    <interactant intactId="EBI-2833872">
        <id>O15552</id>
    </interactant>
    <interactant intactId="EBI-1754287">
        <id>Q9NRZ5</id>
        <label>AGPAT4</label>
    </interactant>
    <organismsDiffer>false</organismsDiffer>
    <experiments>3</experiments>
</comment>
<comment type="interaction">
    <interactant intactId="EBI-2833872">
        <id>O15552</id>
    </interactant>
    <interactant intactId="EBI-11522760">
        <id>Q6RW13-2</id>
        <label>AGTRAP</label>
    </interactant>
    <organismsDiffer>false</organismsDiffer>
    <experiments>3</experiments>
</comment>
<comment type="interaction">
    <interactant intactId="EBI-2833872">
        <id>O15552</id>
    </interactant>
    <interactant intactId="EBI-3904621">
        <id>P20292</id>
        <label>ALOX5AP</label>
    </interactant>
    <organismsDiffer>false</organismsDiffer>
    <experiments>3</experiments>
</comment>
<comment type="interaction">
    <interactant intactId="EBI-2833872">
        <id>O15552</id>
    </interactant>
    <interactant intactId="EBI-715495">
        <id>P05090</id>
        <label>APOD</label>
    </interactant>
    <organismsDiffer>false</organismsDiffer>
    <experiments>3</experiments>
</comment>
<comment type="interaction">
    <interactant intactId="EBI-2833872">
        <id>O15552</id>
    </interactant>
    <interactant intactId="EBI-12069500">
        <id>Q9HD20-3</id>
        <label>ATP13A1</label>
    </interactant>
    <organismsDiffer>false</organismsDiffer>
    <experiments>3</experiments>
</comment>
<comment type="interaction">
    <interactant intactId="EBI-2833872">
        <id>O15552</id>
    </interactant>
    <interactant intactId="EBI-721179">
        <id>P27449</id>
        <label>ATP6V0C</label>
    </interactant>
    <organismsDiffer>false</organismsDiffer>
    <experiments>3</experiments>
</comment>
<comment type="interaction">
    <interactant intactId="EBI-2833872">
        <id>O15552</id>
    </interactant>
    <interactant intactId="EBI-3922513">
        <id>O95393</id>
        <label>BMP10</label>
    </interactant>
    <organismsDiffer>false</organismsDiffer>
    <experiments>3</experiments>
</comment>
<comment type="interaction">
    <interactant intactId="EBI-2833872">
        <id>O15552</id>
    </interactant>
    <interactant intactId="EBI-749464">
        <id>Q12983</id>
        <label>BNIP3</label>
    </interactant>
    <organismsDiffer>false</organismsDiffer>
    <experiments>3</experiments>
</comment>
<comment type="interaction">
    <interactant intactId="EBI-2833872">
        <id>O15552</id>
    </interactant>
    <interactant intactId="EBI-8648738">
        <id>Q8WVV5</id>
        <label>BTN2A2</label>
    </interactant>
    <organismsDiffer>false</organismsDiffer>
    <experiments>3</experiments>
</comment>
<comment type="interaction">
    <interactant intactId="EBI-2833872">
        <id>O15552</id>
    </interactant>
    <interactant intactId="EBI-2836238">
        <id>Q96F05</id>
        <label>C11orf24</label>
    </interactant>
    <organismsDiffer>false</organismsDiffer>
    <experiments>3</experiments>
</comment>
<comment type="interaction">
    <interactant intactId="EBI-2833872">
        <id>O15552</id>
    </interactant>
    <interactant intactId="EBI-12003442">
        <id>Q8WVX3-2</id>
        <label>C4orf3</label>
    </interactant>
    <organismsDiffer>false</organismsDiffer>
    <experiments>3</experiments>
</comment>
<comment type="interaction">
    <interactant intactId="EBI-2833872">
        <id>O15552</id>
    </interactant>
    <interactant intactId="EBI-9686780">
        <id>Q06432</id>
        <label>CACNG1</label>
    </interactant>
    <organismsDiffer>false</organismsDiffer>
    <experiments>3</experiments>
</comment>
<comment type="interaction">
    <interactant intactId="EBI-2833872">
        <id>O15552</id>
    </interactant>
    <interactant intactId="EBI-3953638">
        <id>P27352</id>
        <label>CBLIF</label>
    </interactant>
    <organismsDiffer>false</organismsDiffer>
    <experiments>3</experiments>
</comment>
<comment type="interaction">
    <interactant intactId="EBI-2833872">
        <id>O15552</id>
    </interactant>
    <interactant intactId="EBI-9083477">
        <id>Q9P0B6</id>
        <label>CCDC167</label>
    </interactant>
    <organismsDiffer>false</organismsDiffer>
    <experiments>3</experiments>
</comment>
<comment type="interaction">
    <interactant intactId="EBI-2833872">
        <id>O15552</id>
    </interactant>
    <interactant intactId="EBI-682379">
        <id>P27701</id>
        <label>CD82</label>
    </interactant>
    <organismsDiffer>false</organismsDiffer>
    <experiments>3</experiments>
</comment>
<comment type="interaction">
    <interactant intactId="EBI-2833872">
        <id>O15552</id>
    </interactant>
    <interactant intactId="EBI-358858">
        <id>O14735</id>
        <label>CDIPT</label>
    </interactant>
    <organismsDiffer>false</organismsDiffer>
    <experiments>3</experiments>
</comment>
<comment type="interaction">
    <interactant intactId="EBI-2833872">
        <id>O15552</id>
    </interactant>
    <interactant intactId="EBI-11579371">
        <id>Q9BXR6</id>
        <label>CFHR5</label>
    </interactant>
    <organismsDiffer>false</organismsDiffer>
    <experiments>3</experiments>
</comment>
<comment type="interaction">
    <interactant intactId="EBI-2833872">
        <id>O15552</id>
    </interactant>
    <interactant intactId="EBI-2130213">
        <id>Q99675</id>
        <label>CGRRF1</label>
    </interactant>
    <organismsDiffer>false</organismsDiffer>
    <experiments>3</experiments>
</comment>
<comment type="interaction">
    <interactant intactId="EBI-2833872">
        <id>O15552</id>
    </interactant>
    <interactant intactId="EBI-9316372">
        <id>O14493</id>
        <label>CLDN4</label>
    </interactant>
    <organismsDiffer>false</organismsDiffer>
    <experiments>3</experiments>
</comment>
<comment type="interaction">
    <interactant intactId="EBI-2833872">
        <id>O15552</id>
    </interactant>
    <interactant intactId="EBI-11959453">
        <id>Q8NHS1</id>
        <label>CLDND2</label>
    </interactant>
    <organismsDiffer>false</organismsDiffer>
    <experiments>3</experiments>
</comment>
<comment type="interaction">
    <interactant intactId="EBI-2833872">
        <id>O15552</id>
    </interactant>
    <interactant intactId="EBI-11996768">
        <id>Q8NC01</id>
        <label>CLEC1A</label>
    </interactant>
    <organismsDiffer>false</organismsDiffer>
    <experiments>3</experiments>
</comment>
<comment type="interaction">
    <interactant intactId="EBI-2833872">
        <id>O15552</id>
    </interactant>
    <interactant intactId="EBI-11522780">
        <id>Q96DZ9-2</id>
        <label>CMTM5</label>
    </interactant>
    <organismsDiffer>false</organismsDiffer>
    <experiments>3</experiments>
</comment>
<comment type="interaction">
    <interactant intactId="EBI-2833872">
        <id>O15552</id>
    </interactant>
    <interactant intactId="EBI-2807956">
        <id>Q96FZ5</id>
        <label>CMTM7</label>
    </interactant>
    <organismsDiffer>false</organismsDiffer>
    <experiments>3</experiments>
</comment>
<comment type="interaction">
    <interactant intactId="EBI-2833872">
        <id>O15552</id>
    </interactant>
    <interactant intactId="EBI-12172273">
        <id>O95406</id>
        <label>CNIH1</label>
    </interactant>
    <organismsDiffer>false</organismsDiffer>
    <experiments>3</experiments>
</comment>
<comment type="interaction">
    <interactant intactId="EBI-2833872">
        <id>O15552</id>
    </interactant>
    <interactant intactId="EBI-12211159">
        <id>P29400-2</id>
        <label>COL4A5</label>
    </interactant>
    <organismsDiffer>false</organismsDiffer>
    <experiments>3</experiments>
</comment>
<comment type="interaction">
    <interactant intactId="EBI-2833872">
        <id>O15552</id>
    </interactant>
    <interactant intactId="EBI-3911467">
        <id>Q07325</id>
        <label>CXCL9</label>
    </interactant>
    <organismsDiffer>false</organismsDiffer>
    <experiments>3</experiments>
</comment>
<comment type="interaction">
    <interactant intactId="EBI-2833872">
        <id>O15552</id>
    </interactant>
    <interactant intactId="EBI-10269179">
        <id>Q8NBI2</id>
        <label>CYB561A3</label>
    </interactant>
    <organismsDiffer>false</organismsDiffer>
    <experiments>3</experiments>
</comment>
<comment type="interaction">
    <interactant intactId="EBI-2833872">
        <id>O15552</id>
    </interactant>
    <interactant intactId="EBI-398977">
        <id>Q9BUN8</id>
        <label>DERL1</label>
    </interactant>
    <organismsDiffer>false</organismsDiffer>
    <experiments>3</experiments>
</comment>
<comment type="interaction">
    <interactant intactId="EBI-2833872">
        <id>O15552</id>
    </interactant>
    <interactant intactId="EBI-10215665">
        <id>P56851</id>
        <label>EDDM3B</label>
    </interactant>
    <organismsDiffer>false</organismsDiffer>
    <experiments>3</experiments>
</comment>
<comment type="interaction">
    <interactant intactId="EBI-2833872">
        <id>O15552</id>
    </interactant>
    <interactant intactId="EBI-4319440">
        <id>P54849</id>
        <label>EMP1</label>
    </interactant>
    <organismsDiffer>false</organismsDiffer>
    <experiments>3</experiments>
</comment>
<comment type="interaction">
    <interactant intactId="EBI-2833872">
        <id>O15552</id>
    </interactant>
    <interactant intactId="EBI-711490">
        <id>Q9UKR5</id>
        <label>ERG28</label>
    </interactant>
    <organismsDiffer>false</organismsDiffer>
    <experiments>3</experiments>
</comment>
<comment type="interaction">
    <interactant intactId="EBI-2833872">
        <id>O15552</id>
    </interactant>
    <interactant intactId="EBI-11090967">
        <id>O75063</id>
        <label>FAM20B</label>
    </interactant>
    <organismsDiffer>false</organismsDiffer>
    <experiments>3</experiments>
</comment>
<comment type="interaction">
    <interactant intactId="EBI-2833872">
        <id>O15552</id>
    </interactant>
    <interactant intactId="EBI-2876774">
        <id>Q92520</id>
        <label>FAM3C</label>
    </interactant>
    <organismsDiffer>false</organismsDiffer>
    <experiments>3</experiments>
</comment>
<comment type="interaction">
    <interactant intactId="EBI-2833872">
        <id>O15552</id>
    </interactant>
    <interactant intactId="EBI-12142299">
        <id>Q96IV6</id>
        <label>FAXDC2</label>
    </interactant>
    <organismsDiffer>false</organismsDiffer>
    <experiments>3</experiments>
</comment>
<comment type="interaction">
    <interactant intactId="EBI-2833872">
        <id>O15552</id>
    </interactant>
    <interactant intactId="EBI-11784425">
        <id>PRO_0000009136</id>
        <label>FCN1</label>
        <dbReference type="UniProtKB" id="O00602"/>
    </interactant>
    <organismsDiffer>false</organismsDiffer>
    <experiments>7</experiments>
</comment>
<comment type="interaction">
    <interactant intactId="EBI-2833872">
        <id>O15552</id>
    </interactant>
    <interactant intactId="EBI-3385283">
        <id>Q9Y3D6</id>
        <label>FIS1</label>
    </interactant>
    <organismsDiffer>false</organismsDiffer>
    <experiments>3</experiments>
</comment>
<comment type="interaction">
    <interactant intactId="EBI-2833872">
        <id>O15552</id>
    </interactant>
    <interactant intactId="EBI-12175685">
        <id>Q14802-3</id>
        <label>FXYD3</label>
    </interactant>
    <organismsDiffer>false</organismsDiffer>
    <experiments>3</experiments>
</comment>
<comment type="interaction">
    <interactant intactId="EBI-2833872">
        <id>O15552</id>
    </interactant>
    <interactant intactId="EBI-713304">
        <id>Q9H0Q3</id>
        <label>FXYD6</label>
    </interactant>
    <organismsDiffer>false</organismsDiffer>
    <experiments>3</experiments>
</comment>
<comment type="interaction">
    <interactant intactId="EBI-2833872">
        <id>O15552</id>
    </interactant>
    <interactant intactId="EBI-746917">
        <id>O75084</id>
        <label>FZD7</label>
    </interactant>
    <organismsDiffer>false</organismsDiffer>
    <experiments>3</experiments>
</comment>
<comment type="interaction">
    <interactant intactId="EBI-2833872">
        <id>O15552</id>
    </interactant>
    <interactant intactId="EBI-3925203">
        <id>Q8N3T1</id>
        <label>GALNT15</label>
    </interactant>
    <organismsDiffer>false</organismsDiffer>
    <experiments>3</experiments>
</comment>
<comment type="interaction">
    <interactant intactId="EBI-2833872">
        <id>O15552</id>
    </interactant>
    <interactant intactId="EBI-3905204">
        <id>P29033</id>
        <label>GJB2</label>
    </interactant>
    <organismsDiffer>false</organismsDiffer>
    <experiments>3</experiments>
</comment>
<comment type="interaction">
    <interactant intactId="EBI-2833872">
        <id>O15552</id>
    </interactant>
    <interactant intactId="EBI-2927498">
        <id>O60883</id>
        <label>GPR37L1</label>
    </interactant>
    <organismsDiffer>false</organismsDiffer>
    <experiments>3</experiments>
</comment>
<comment type="interaction">
    <interactant intactId="EBI-2833872">
        <id>O15552</id>
    </interactant>
    <interactant intactId="EBI-12244272">
        <id>Q02747</id>
        <label>GUCA2A</label>
    </interactant>
    <organismsDiffer>false</organismsDiffer>
    <experiments>3</experiments>
</comment>
<comment type="interaction">
    <interactant intactId="EBI-2833872">
        <id>O15552</id>
    </interactant>
    <interactant intactId="EBI-702665">
        <id>P02724</id>
        <label>GYPA</label>
    </interactant>
    <organismsDiffer>false</organismsDiffer>
    <experiments>3</experiments>
</comment>
<comment type="interaction">
    <interactant intactId="EBI-2833872">
        <id>O15552</id>
    </interactant>
    <interactant intactId="EBI-7932862">
        <id>Q01628</id>
        <label>IFITM3</label>
    </interactant>
    <organismsDiffer>false</organismsDiffer>
    <experiments>3</experiments>
</comment>
<comment type="interaction">
    <interactant intactId="EBI-2833872">
        <id>O15552</id>
    </interactant>
    <interactant intactId="EBI-298429">
        <id>P04264</id>
        <label>KRT1</label>
    </interactant>
    <organismsDiffer>false</organismsDiffer>
    <experiments>3</experiments>
</comment>
<comment type="interaction">
    <interactant intactId="EBI-2833872">
        <id>O15552</id>
    </interactant>
    <interactant intactId="EBI-12007212">
        <id>Q86UP2-3</id>
        <label>KTN1</label>
    </interactant>
    <organismsDiffer>false</organismsDiffer>
    <experiments>3</experiments>
</comment>
<comment type="interaction">
    <interactant intactId="EBI-2833872">
        <id>O15552</id>
    </interactant>
    <interactant intactId="EBI-723416">
        <id>Q15012</id>
        <label>LAPTM4A</label>
    </interactant>
    <organismsDiffer>false</organismsDiffer>
    <experiments>3</experiments>
</comment>
<comment type="interaction">
    <interactant intactId="EBI-2833872">
        <id>O15552</id>
    </interactant>
    <interactant intactId="EBI-8070286">
        <id>O43561-2</id>
        <label>LAT</label>
    </interactant>
    <organismsDiffer>false</organismsDiffer>
    <experiments>3</experiments>
</comment>
<comment type="interaction">
    <interactant intactId="EBI-2833872">
        <id>O15552</id>
    </interactant>
    <interactant intactId="EBI-750776">
        <id>O95214</id>
        <label>LEPROTL1</label>
    </interactant>
    <organismsDiffer>false</organismsDiffer>
    <experiments>3</experiments>
</comment>
<comment type="interaction">
    <interactant intactId="EBI-2833872">
        <id>O15552</id>
    </interactant>
    <interactant intactId="EBI-2820517">
        <id>Q8TAF8</id>
        <label>LHFPL5</label>
    </interactant>
    <organismsDiffer>false</organismsDiffer>
    <experiments>3</experiments>
</comment>
<comment type="interaction">
    <interactant intactId="EBI-2833872">
        <id>O15552</id>
    </interactant>
    <interactant intactId="EBI-12033434">
        <id>Q9UBY5</id>
        <label>LPAR3</label>
    </interactant>
    <organismsDiffer>false</organismsDiffer>
    <experiments>3</experiments>
</comment>
<comment type="interaction">
    <interactant intactId="EBI-2833872">
        <id>O15552</id>
    </interactant>
    <interactant intactId="EBI-750078">
        <id>Q13021</id>
        <label>MALL</label>
    </interactant>
    <organismsDiffer>false</organismsDiffer>
    <experiments>3</experiments>
</comment>
<comment type="interaction">
    <interactant intactId="EBI-2833872">
        <id>O15552</id>
    </interactant>
    <interactant intactId="EBI-3920969">
        <id>Q6N075</id>
        <label>MFSD5</label>
    </interactant>
    <organismsDiffer>false</organismsDiffer>
    <experiments>3</experiments>
</comment>
<comment type="interaction">
    <interactant intactId="EBI-2833872">
        <id>O15552</id>
    </interactant>
    <interactant intactId="EBI-12070086">
        <id>Q5J8X5</id>
        <label>MS4A13</label>
    </interactant>
    <organismsDiffer>false</organismsDiffer>
    <experiments>3</experiments>
</comment>
<comment type="interaction">
    <interactant intactId="EBI-2833872">
        <id>O15552</id>
    </interactant>
    <interactant intactId="EBI-2863634">
        <id>Q9UHE5</id>
        <label>NAT8</label>
    </interactant>
    <organismsDiffer>false</organismsDiffer>
    <experiments>3</experiments>
</comment>
<comment type="interaction">
    <interactant intactId="EBI-2833872">
        <id>O15552</id>
    </interactant>
    <interactant intactId="EBI-9550165">
        <id>Q0D2K0</id>
        <label>NIPAL4</label>
    </interactant>
    <organismsDiffer>false</organismsDiffer>
    <experiments>3</experiments>
</comment>
<comment type="interaction">
    <interactant intactId="EBI-2833872">
        <id>O15552</id>
    </interactant>
    <interactant intactId="EBI-3919611">
        <id>Q16617</id>
        <label>NKG7</label>
    </interactant>
    <organismsDiffer>false</organismsDiffer>
    <experiments>3</experiments>
</comment>
<comment type="interaction">
    <interactant intactId="EBI-2833872">
        <id>O15552</id>
    </interactant>
    <interactant intactId="EBI-10262547">
        <id>Q8IXM6</id>
        <label>NRM</label>
    </interactant>
    <organismsDiffer>false</organismsDiffer>
    <experiments>3</experiments>
</comment>
<comment type="interaction">
    <interactant intactId="EBI-2833872">
        <id>O15552</id>
    </interactant>
    <interactant intactId="EBI-6380741">
        <id>P42857</id>
        <label>NSG1</label>
    </interactant>
    <organismsDiffer>false</organismsDiffer>
    <experiments>3</experiments>
</comment>
<comment type="interaction">
    <interactant intactId="EBI-2833872">
        <id>O15552</id>
    </interactant>
    <interactant intactId="EBI-13339917">
        <id>Q8NH19</id>
        <label>OR10AG1</label>
    </interactant>
    <organismsDiffer>false</organismsDiffer>
    <experiments>3</experiments>
</comment>
<comment type="interaction">
    <interactant intactId="EBI-2833872">
        <id>O15552</id>
    </interactant>
    <interactant intactId="EBI-981985">
        <id>Q9Y5Y5</id>
        <label>PEX16</label>
    </interactant>
    <organismsDiffer>false</organismsDiffer>
    <experiments>3</experiments>
</comment>
<comment type="interaction">
    <interactant intactId="EBI-2833872">
        <id>O15552</id>
    </interactant>
    <interactant intactId="EBI-12188331">
        <id>P60201-2</id>
        <label>PLP1</label>
    </interactant>
    <organismsDiffer>false</organismsDiffer>
    <experiments>3</experiments>
</comment>
<comment type="interaction">
    <interactant intactId="EBI-2833872">
        <id>O15552</id>
    </interactant>
    <interactant intactId="EBI-2845982">
        <id>Q01453</id>
        <label>PMP22</label>
    </interactant>
    <organismsDiffer>false</organismsDiffer>
    <experiments>3</experiments>
</comment>
<comment type="interaction">
    <interactant intactId="EBI-2833872">
        <id>O15552</id>
    </interactant>
    <interactant intactId="EBI-8652812">
        <id>P54315</id>
        <label>PNLIPRP1</label>
    </interactant>
    <organismsDiffer>false</organismsDiffer>
    <experiments>3</experiments>
</comment>
<comment type="interaction">
    <interactant intactId="EBI-2833872">
        <id>O15552</id>
    </interactant>
    <interactant intactId="EBI-1052363">
        <id>Q9NS64</id>
        <label>RPRM</label>
    </interactant>
    <organismsDiffer>false</organismsDiffer>
    <experiments>3</experiments>
</comment>
<comment type="interaction">
    <interactant intactId="EBI-2833872">
        <id>O15552</id>
    </interactant>
    <interactant intactId="EBI-10244780">
        <id>Q5QGT7</id>
        <label>RTP2</label>
    </interactant>
    <organismsDiffer>false</organismsDiffer>
    <experiments>3</experiments>
</comment>
<comment type="interaction">
    <interactant intactId="EBI-2833872">
        <id>O15552</id>
    </interactant>
    <interactant intactId="EBI-8636004">
        <id>Q96GQ5</id>
        <label>RUSF1</label>
    </interactant>
    <organismsDiffer>false</organismsDiffer>
    <experiments>3</experiments>
</comment>
<comment type="interaction">
    <interactant intactId="EBI-2833872">
        <id>O15552</id>
    </interactant>
    <interactant intactId="EBI-3917235">
        <id>Q9NTJ5</id>
        <label>SACM1L</label>
    </interactant>
    <organismsDiffer>false</organismsDiffer>
    <experiments>3</experiments>
</comment>
<comment type="interaction">
    <interactant intactId="EBI-2833872">
        <id>O15552</id>
    </interactant>
    <interactant intactId="EBI-12825395">
        <id>O95968</id>
        <label>SCGB1D1</label>
    </interactant>
    <organismsDiffer>false</organismsDiffer>
    <experiments>3</experiments>
</comment>
<comment type="interaction">
    <interactant intactId="EBI-2833872">
        <id>O15552</id>
    </interactant>
    <interactant intactId="EBI-9679163">
        <id>Q9Y6D0</id>
        <label>SELENOK</label>
    </interactant>
    <organismsDiffer>false</organismsDiffer>
    <experiments>3</experiments>
</comment>
<comment type="interaction">
    <interactant intactId="EBI-2833872">
        <id>O15552</id>
    </interactant>
    <interactant intactId="EBI-8644112">
        <id>Q9BRI3</id>
        <label>SLC30A2</label>
    </interactant>
    <organismsDiffer>false</organismsDiffer>
    <experiments>3</experiments>
</comment>
<comment type="interaction">
    <interactant intactId="EBI-2833872">
        <id>O15552</id>
    </interactant>
    <interactant intactId="EBI-10281213">
        <id>Q969S0</id>
        <label>SLC35B4</label>
    </interactant>
    <organismsDiffer>false</organismsDiffer>
    <experiments>3</experiments>
</comment>
<comment type="interaction">
    <interactant intactId="EBI-2833872">
        <id>O15552</id>
    </interactant>
    <interactant intactId="EBI-17295964">
        <id>Q9NQQ7-3</id>
        <label>SLC35C2</label>
    </interactant>
    <organismsDiffer>false</organismsDiffer>
    <experiments>3</experiments>
</comment>
<comment type="interaction">
    <interactant intactId="EBI-2833872">
        <id>O15552</id>
    </interactant>
    <interactant intactId="EBI-13389236">
        <id>Q7Z769</id>
        <label>SLC35E3</label>
    </interactant>
    <organismsDiffer>false</organismsDiffer>
    <experiments>3</experiments>
</comment>
<comment type="interaction">
    <interactant intactId="EBI-2833872">
        <id>O15552</id>
    </interactant>
    <interactant intactId="EBI-9978441">
        <id>Q9H2H9</id>
        <label>SLC38A1</label>
    </interactant>
    <organismsDiffer>false</organismsDiffer>
    <experiments>3</experiments>
</comment>
<comment type="interaction">
    <interactant intactId="EBI-2833872">
        <id>O15552</id>
    </interactant>
    <interactant intactId="EBI-2823239">
        <id>Q9NUM3</id>
        <label>SLC39A9</label>
    </interactant>
    <organismsDiffer>false</organismsDiffer>
    <experiments>3</experiments>
</comment>
<comment type="interaction">
    <interactant intactId="EBI-2833872">
        <id>O15552</id>
    </interactant>
    <interactant intactId="EBI-12266234">
        <id>Q8IVJ1</id>
        <label>SLC41A1</label>
    </interactant>
    <organismsDiffer>false</organismsDiffer>
    <experiments>3</experiments>
</comment>
<comment type="interaction">
    <interactant intactId="EBI-2833872">
        <id>O15552</id>
    </interactant>
    <interactant intactId="EBI-10226799">
        <id>Q0VAQ4</id>
        <label>SMAGP</label>
    </interactant>
    <organismsDiffer>false</organismsDiffer>
    <experiments>3</experiments>
</comment>
<comment type="interaction">
    <interactant intactId="EBI-2833872">
        <id>O15552</id>
    </interactant>
    <interactant intactId="EBI-8640191">
        <id>Q9NRQ5</id>
        <label>SMCO4</label>
    </interactant>
    <organismsDiffer>false</organismsDiffer>
    <experiments>3</experiments>
</comment>
<comment type="interaction">
    <interactant intactId="EBI-2833872">
        <id>O15552</id>
    </interactant>
    <interactant intactId="EBI-12188413">
        <id>B2RUZ4</id>
        <label>SMIM1</label>
    </interactant>
    <organismsDiffer>false</organismsDiffer>
    <experiments>3</experiments>
</comment>
<comment type="interaction">
    <interactant intactId="EBI-2833872">
        <id>O15552</id>
    </interactant>
    <interactant intactId="EBI-12200293">
        <id>P0DN84</id>
        <label>STRIT1</label>
    </interactant>
    <organismsDiffer>false</organismsDiffer>
    <experiments>3</experiments>
</comment>
<comment type="interaction">
    <interactant intactId="EBI-2833872">
        <id>O15552</id>
    </interactant>
    <interactant intactId="EBI-727240">
        <id>Q9UNK0</id>
        <label>STX8</label>
    </interactant>
    <organismsDiffer>false</organismsDiffer>
    <experiments>3</experiments>
</comment>
<comment type="interaction">
    <interactant intactId="EBI-2833872">
        <id>O15552</id>
    </interactant>
    <interactant intactId="EBI-726331">
        <id>Q9H7V2</id>
        <label>SYNDIG1</label>
    </interactant>
    <organismsDiffer>false</organismsDiffer>
    <experiments>3</experiments>
</comment>
<comment type="interaction">
    <interactant intactId="EBI-2833872">
        <id>O15552</id>
    </interactant>
    <interactant intactId="EBI-10329860">
        <id>Q9Y6I9</id>
        <label>TEX264</label>
    </interactant>
    <organismsDiffer>false</organismsDiffer>
    <experiments>3</experiments>
</comment>
<comment type="interaction">
    <interactant intactId="EBI-2833872">
        <id>O15552</id>
    </interactant>
    <interactant intactId="EBI-8650934">
        <id>P48230</id>
        <label>TM4SF4</label>
    </interactant>
    <organismsDiffer>false</organismsDiffer>
    <experiments>3</experiments>
</comment>
<comment type="interaction">
    <interactant intactId="EBI-2833872">
        <id>O15552</id>
    </interactant>
    <interactant intactId="EBI-723946">
        <id>P17152</id>
        <label>TMEM11</label>
    </interactant>
    <organismsDiffer>false</organismsDiffer>
    <experiments>3</experiments>
</comment>
<comment type="interaction">
    <interactant intactId="EBI-2833872">
        <id>O15552</id>
    </interactant>
    <interactant intactId="EBI-10171534">
        <id>A0PK00</id>
        <label>TMEM120B</label>
    </interactant>
    <organismsDiffer>false</organismsDiffer>
    <experiments>3</experiments>
</comment>
<comment type="interaction">
    <interactant intactId="EBI-2833872">
        <id>O15552</id>
    </interactant>
    <interactant intactId="EBI-12876358">
        <id>Q7Z5S9</id>
        <label>TMEM144</label>
    </interactant>
    <organismsDiffer>false</organismsDiffer>
    <experiments>3</experiments>
</comment>
<comment type="interaction">
    <interactant intactId="EBI-2833872">
        <id>O15552</id>
    </interactant>
    <interactant intactId="EBI-348587">
        <id>Q9BVK8</id>
        <label>TMEM147</label>
    </interactant>
    <organismsDiffer>false</organismsDiffer>
    <experiments>3</experiments>
</comment>
<comment type="interaction">
    <interactant intactId="EBI-2833872">
        <id>O15552</id>
    </interactant>
    <interactant intactId="EBI-12274070">
        <id>Q969S6</id>
        <label>TMEM203</label>
    </interactant>
    <organismsDiffer>false</organismsDiffer>
    <experiments>3</experiments>
</comment>
<comment type="interaction">
    <interactant intactId="EBI-2833872">
        <id>O15552</id>
    </interactant>
    <interactant intactId="EBI-11528917">
        <id>Q8WW34-2</id>
        <label>TMEM239</label>
    </interactant>
    <organismsDiffer>false</organismsDiffer>
    <experiments>3</experiments>
</comment>
<comment type="interaction">
    <interactant intactId="EBI-2833872">
        <id>O15552</id>
    </interactant>
    <interactant intactId="EBI-17180389">
        <id>E9PQX1</id>
        <label>TMEM262</label>
    </interactant>
    <organismsDiffer>false</organismsDiffer>
    <experiments>3</experiments>
</comment>
<comment type="interaction">
    <interactant intactId="EBI-2833872">
        <id>O15552</id>
    </interactant>
    <interactant intactId="EBI-2852148">
        <id>Q9H2L4</id>
        <label>TMEM60</label>
    </interactant>
    <organismsDiffer>false</organismsDiffer>
    <experiments>3</experiments>
</comment>
<comment type="interaction">
    <interactant intactId="EBI-2833872">
        <id>O15552</id>
    </interactant>
    <interactant intactId="EBI-12015604">
        <id>Q8N2M4</id>
        <label>TMEM86A</label>
    </interactant>
    <organismsDiffer>false</organismsDiffer>
    <experiments>3</experiments>
</comment>
<comment type="interaction">
    <interactant intactId="EBI-2833872">
        <id>O15552</id>
    </interactant>
    <interactant intactId="EBI-12111910">
        <id>Q5BJF2</id>
        <label>TMEM97</label>
    </interactant>
    <organismsDiffer>false</organismsDiffer>
    <experiments>3</experiments>
</comment>
<comment type="interaction">
    <interactant intactId="EBI-2833872">
        <id>O15552</id>
    </interactant>
    <interactant intactId="EBI-359977">
        <id>P01375</id>
        <label>TNF</label>
    </interactant>
    <organismsDiffer>false</organismsDiffer>
    <experiments>3</experiments>
</comment>
<comment type="interaction">
    <interactant intactId="EBI-2833872">
        <id>O15552</id>
    </interactant>
    <interactant intactId="EBI-12195249">
        <id>Q5TGU0</id>
        <label>TSPO2</label>
    </interactant>
    <organismsDiffer>false</organismsDiffer>
    <experiments>3</experiments>
</comment>
<comment type="interaction">
    <interactant intactId="EBI-2833872">
        <id>O15552</id>
    </interactant>
    <interactant intactId="EBI-10243654">
        <id>Q5BVD1</id>
        <label>TTMP</label>
    </interactant>
    <organismsDiffer>false</organismsDiffer>
    <experiments>3</experiments>
</comment>
<comment type="interaction">
    <interactant intactId="EBI-2833872">
        <id>O15552</id>
    </interactant>
    <interactant intactId="EBI-7601760">
        <id>Q53HI1</id>
        <label>UNC50</label>
    </interactant>
    <organismsDiffer>false</organismsDiffer>
    <experiments>3</experiments>
</comment>
<comment type="interaction">
    <interactant intactId="EBI-2833872">
        <id>O15552</id>
    </interactant>
    <interactant intactId="EBI-12237619">
        <id>O75841</id>
        <label>UPK1B</label>
    </interactant>
    <organismsDiffer>false</organismsDiffer>
    <experiments>3</experiments>
</comment>
<comment type="interaction">
    <interactant intactId="EBI-2833872">
        <id>O15552</id>
    </interactant>
    <interactant intactId="EBI-2799703">
        <id>O95070</id>
        <label>YIF1A</label>
    </interactant>
    <organismsDiffer>false</organismsDiffer>
    <experiments>3</experiments>
</comment>
<comment type="interaction">
    <interactant intactId="EBI-2833872">
        <id>O15552</id>
    </interactant>
    <interactant intactId="EBI-751204">
        <id>Q9BWQ6</id>
        <label>YIPF2</label>
    </interactant>
    <organismsDiffer>false</organismsDiffer>
    <experiments>3</experiments>
</comment>
<comment type="interaction">
    <interactant intactId="EBI-2833872">
        <id>O15552</id>
    </interactant>
    <interactant intactId="EBI-751210">
        <id>Q96EC8</id>
        <label>YIPF6</label>
    </interactant>
    <organismsDiffer>false</organismsDiffer>
    <experiments>3</experiments>
</comment>
<comment type="subcellular location">
    <subcellularLocation>
        <location evidence="7">Cell membrane</location>
        <topology evidence="7">Multi-pass membrane protein</topology>
    </subcellularLocation>
</comment>
<comment type="tissue specificity">
    <text evidence="4 5">Expressed at relatively high levels in peripheral blood leukocytes and, to lesser extent, in spleen.</text>
</comment>
<comment type="similarity">
    <text evidence="2">Belongs to the G-protein coupled receptor 1 family.</text>
</comment>
<dbReference type="EMBL" id="AF024690">
    <property type="protein sequence ID" value="AAB86713.1"/>
    <property type="molecule type" value="Genomic_DNA"/>
</dbReference>
<dbReference type="EMBL" id="AC002511">
    <property type="protein sequence ID" value="AAB67886.1"/>
    <property type="molecule type" value="Genomic_DNA"/>
</dbReference>
<dbReference type="EMBL" id="EU432114">
    <property type="protein sequence ID" value="ABY87913.1"/>
    <property type="molecule type" value="Genomic_DNA"/>
</dbReference>
<dbReference type="EMBL" id="BC095535">
    <property type="protein sequence ID" value="AAH95535.1"/>
    <property type="molecule type" value="mRNA"/>
</dbReference>
<dbReference type="EMBL" id="BC096198">
    <property type="protein sequence ID" value="AAH96198.1"/>
    <property type="molecule type" value="mRNA"/>
</dbReference>
<dbReference type="EMBL" id="BC096199">
    <property type="protein sequence ID" value="AAH96199.1"/>
    <property type="molecule type" value="mRNA"/>
</dbReference>
<dbReference type="EMBL" id="BC096200">
    <property type="protein sequence ID" value="AAH96200.1"/>
    <property type="molecule type" value="mRNA"/>
</dbReference>
<dbReference type="EMBL" id="BC096201">
    <property type="protein sequence ID" value="AAH96201.1"/>
    <property type="molecule type" value="mRNA"/>
</dbReference>
<dbReference type="CCDS" id="CCDS12461.1"/>
<dbReference type="PIR" id="JC5717">
    <property type="entry name" value="JC5717"/>
</dbReference>
<dbReference type="RefSeq" id="NP_001357016.1">
    <property type="nucleotide sequence ID" value="NM_001370087.1"/>
</dbReference>
<dbReference type="RefSeq" id="NP_005297.1">
    <property type="nucleotide sequence ID" value="NM_005306.3"/>
</dbReference>
<dbReference type="RefSeq" id="XP_016882198.1">
    <property type="nucleotide sequence ID" value="XM_017026709.1"/>
</dbReference>
<dbReference type="RefSeq" id="XP_016882199.1">
    <property type="nucleotide sequence ID" value="XM_017026710.1"/>
</dbReference>
<dbReference type="RefSeq" id="XP_016882200.1">
    <property type="nucleotide sequence ID" value="XM_017026711.2"/>
</dbReference>
<dbReference type="RefSeq" id="XP_047294655.1">
    <property type="nucleotide sequence ID" value="XM_047438699.1"/>
</dbReference>
<dbReference type="RefSeq" id="XP_047294656.1">
    <property type="nucleotide sequence ID" value="XM_047438700.1"/>
</dbReference>
<dbReference type="RefSeq" id="XP_054176709.1">
    <property type="nucleotide sequence ID" value="XM_054320734.1"/>
</dbReference>
<dbReference type="RefSeq" id="XP_054176710.1">
    <property type="nucleotide sequence ID" value="XM_054320735.1"/>
</dbReference>
<dbReference type="RefSeq" id="XP_054176711.1">
    <property type="nucleotide sequence ID" value="XM_054320736.1"/>
</dbReference>
<dbReference type="PDB" id="8J22">
    <property type="method" value="EM"/>
    <property type="resolution" value="3.20 A"/>
    <property type="chains" value="C=1-311"/>
</dbReference>
<dbReference type="PDB" id="8J23">
    <property type="method" value="EM"/>
    <property type="resolution" value="3.20 A"/>
    <property type="chains" value="A=1-311"/>
</dbReference>
<dbReference type="PDB" id="8J24">
    <property type="method" value="EM"/>
    <property type="resolution" value="2.60 A"/>
    <property type="chains" value="D=1-311"/>
</dbReference>
<dbReference type="PDB" id="8T3S">
    <property type="method" value="EM"/>
    <property type="resolution" value="3.07 A"/>
    <property type="chains" value="R=3-279"/>
</dbReference>
<dbReference type="PDB" id="9K1D">
    <property type="method" value="EM"/>
    <property type="resolution" value="3.34 A"/>
    <property type="chains" value="R=1-330"/>
</dbReference>
<dbReference type="PDBsum" id="8J22"/>
<dbReference type="PDBsum" id="8J23"/>
<dbReference type="PDBsum" id="8J24"/>
<dbReference type="PDBsum" id="8T3S"/>
<dbReference type="PDBsum" id="9K1D"/>
<dbReference type="EMDB" id="EMD-35942"/>
<dbReference type="EMDB" id="EMD-35943"/>
<dbReference type="EMDB" id="EMD-35944"/>
<dbReference type="EMDB" id="EMD-41010"/>
<dbReference type="EMDB" id="EMD-61972"/>
<dbReference type="SMR" id="O15552"/>
<dbReference type="BioGRID" id="109125">
    <property type="interactions" value="120"/>
</dbReference>
<dbReference type="FunCoup" id="O15552">
    <property type="interactions" value="814"/>
</dbReference>
<dbReference type="IntAct" id="O15552">
    <property type="interactions" value="111"/>
</dbReference>
<dbReference type="STRING" id="9606.ENSP00000473159"/>
<dbReference type="BindingDB" id="O15552"/>
<dbReference type="ChEMBL" id="CHEMBL5493"/>
<dbReference type="DrugBank" id="DB15406">
    <property type="generic name" value="GLPG-0974"/>
</dbReference>
<dbReference type="DrugBank" id="DB02531">
    <property type="generic name" value="Isobutyric acid"/>
</dbReference>
<dbReference type="DrugBank" id="DB02406">
    <property type="generic name" value="N-Valeric Acid"/>
</dbReference>
<dbReference type="DrugCentral" id="O15552"/>
<dbReference type="GuidetoPHARMACOLOGY" id="226"/>
<dbReference type="SwissLipids" id="SLP:000001558"/>
<dbReference type="TCDB" id="9.A.14.13.47">
    <property type="family name" value="the g-protein-coupled receptor (gpcr) family"/>
</dbReference>
<dbReference type="GlyCosmos" id="O15552">
    <property type="glycosylation" value="2 sites, No reported glycans"/>
</dbReference>
<dbReference type="GlyGen" id="O15552">
    <property type="glycosylation" value="2 sites"/>
</dbReference>
<dbReference type="iPTMnet" id="O15552"/>
<dbReference type="PhosphoSitePlus" id="O15552"/>
<dbReference type="BioMuta" id="FFAR2"/>
<dbReference type="MassIVE" id="O15552"/>
<dbReference type="PaxDb" id="9606-ENSP00000473159"/>
<dbReference type="PeptideAtlas" id="O15552"/>
<dbReference type="Antibodypedia" id="15916">
    <property type="antibodies" value="350 antibodies from 31 providers"/>
</dbReference>
<dbReference type="DNASU" id="2867"/>
<dbReference type="Ensembl" id="ENST00000246549.2">
    <property type="protein sequence ID" value="ENSP00000246549.2"/>
    <property type="gene ID" value="ENSG00000126262.5"/>
</dbReference>
<dbReference type="Ensembl" id="ENST00000599180.3">
    <property type="protein sequence ID" value="ENSP00000473159.1"/>
    <property type="gene ID" value="ENSG00000126262.5"/>
</dbReference>
<dbReference type="GeneID" id="2867"/>
<dbReference type="KEGG" id="hsa:2867"/>
<dbReference type="MANE-Select" id="ENST00000599180.3">
    <property type="protein sequence ID" value="ENSP00000473159.1"/>
    <property type="RefSeq nucleotide sequence ID" value="NM_001370087.1"/>
    <property type="RefSeq protein sequence ID" value="NP_001357016.1"/>
</dbReference>
<dbReference type="UCSC" id="uc010eea.4">
    <property type="organism name" value="human"/>
</dbReference>
<dbReference type="AGR" id="HGNC:4501"/>
<dbReference type="CTD" id="2867"/>
<dbReference type="DisGeNET" id="2867"/>
<dbReference type="GeneCards" id="FFAR2"/>
<dbReference type="HGNC" id="HGNC:4501">
    <property type="gene designation" value="FFAR2"/>
</dbReference>
<dbReference type="HPA" id="ENSG00000126262">
    <property type="expression patterns" value="Tissue enhanced (bone marrow, lymphoid tissue)"/>
</dbReference>
<dbReference type="MIM" id="603823">
    <property type="type" value="gene"/>
</dbReference>
<dbReference type="neXtProt" id="NX_O15552"/>
<dbReference type="OpenTargets" id="ENSG00000126262"/>
<dbReference type="PharmGKB" id="PA28890"/>
<dbReference type="VEuPathDB" id="HostDB:ENSG00000126262"/>
<dbReference type="eggNOG" id="ENOG502QQGM">
    <property type="taxonomic scope" value="Eukaryota"/>
</dbReference>
<dbReference type="GeneTree" id="ENSGT00990000203527"/>
<dbReference type="HOGENOM" id="CLU_009579_8_4_1"/>
<dbReference type="InParanoid" id="O15552"/>
<dbReference type="OMA" id="ITIFCYW"/>
<dbReference type="OrthoDB" id="5961208at2759"/>
<dbReference type="PAN-GO" id="O15552">
    <property type="GO annotations" value="4 GO annotations based on evolutionary models"/>
</dbReference>
<dbReference type="PhylomeDB" id="O15552"/>
<dbReference type="TreeFam" id="TF350010"/>
<dbReference type="PathwayCommons" id="O15552"/>
<dbReference type="Reactome" id="R-HSA-416476">
    <property type="pathway name" value="G alpha (q) signalling events"/>
</dbReference>
<dbReference type="Reactome" id="R-HSA-444209">
    <property type="pathway name" value="Free fatty acid receptors"/>
</dbReference>
<dbReference type="SignaLink" id="O15552"/>
<dbReference type="SIGNOR" id="O15552"/>
<dbReference type="BioGRID-ORCS" id="2867">
    <property type="hits" value="12 hits in 1149 CRISPR screens"/>
</dbReference>
<dbReference type="GenomeRNAi" id="2867"/>
<dbReference type="Pharos" id="O15552">
    <property type="development level" value="Tchem"/>
</dbReference>
<dbReference type="PRO" id="PR:O15552"/>
<dbReference type="Proteomes" id="UP000005640">
    <property type="component" value="Chromosome 19"/>
</dbReference>
<dbReference type="RNAct" id="O15552">
    <property type="molecule type" value="protein"/>
</dbReference>
<dbReference type="Bgee" id="ENSG00000126262">
    <property type="expression patterns" value="Expressed in blood and 98 other cell types or tissues"/>
</dbReference>
<dbReference type="ExpressionAtlas" id="O15552">
    <property type="expression patterns" value="baseline and differential"/>
</dbReference>
<dbReference type="GO" id="GO:0042995">
    <property type="term" value="C:cell projection"/>
    <property type="evidence" value="ECO:0007669"/>
    <property type="project" value="Ensembl"/>
</dbReference>
<dbReference type="GO" id="GO:0005886">
    <property type="term" value="C:plasma membrane"/>
    <property type="evidence" value="ECO:0000314"/>
    <property type="project" value="UniProtKB"/>
</dbReference>
<dbReference type="GO" id="GO:0004930">
    <property type="term" value="F:G protein-coupled receptor activity"/>
    <property type="evidence" value="ECO:0000314"/>
    <property type="project" value="UniProtKB"/>
</dbReference>
<dbReference type="GO" id="GO:0008289">
    <property type="term" value="F:lipid binding"/>
    <property type="evidence" value="ECO:0007669"/>
    <property type="project" value="UniProtKB-KW"/>
</dbReference>
<dbReference type="GO" id="GO:0002752">
    <property type="term" value="P:cell surface pattern recognition receptor signaling pathway"/>
    <property type="evidence" value="ECO:0000315"/>
    <property type="project" value="UniProtKB"/>
</dbReference>
<dbReference type="GO" id="GO:0071398">
    <property type="term" value="P:cellular response to fatty acid"/>
    <property type="evidence" value="ECO:0000314"/>
    <property type="project" value="UniProtKB"/>
</dbReference>
<dbReference type="GO" id="GO:0045444">
    <property type="term" value="P:fat cell differentiation"/>
    <property type="evidence" value="ECO:0000250"/>
    <property type="project" value="UniProtKB"/>
</dbReference>
<dbReference type="GO" id="GO:0007186">
    <property type="term" value="P:G protein-coupled receptor signaling pathway"/>
    <property type="evidence" value="ECO:0000314"/>
    <property type="project" value="UniProtKB"/>
</dbReference>
<dbReference type="GO" id="GO:0042593">
    <property type="term" value="P:glucose homeostasis"/>
    <property type="evidence" value="ECO:0000250"/>
    <property type="project" value="UniProtKB"/>
</dbReference>
<dbReference type="GO" id="GO:0002232">
    <property type="term" value="P:leukocyte chemotaxis involved in inflammatory response"/>
    <property type="evidence" value="ECO:0000250"/>
    <property type="project" value="UniProtKB"/>
</dbReference>
<dbReference type="GO" id="GO:1990806">
    <property type="term" value="P:ligand-gated ion channel signaling pathway"/>
    <property type="evidence" value="ECO:0007669"/>
    <property type="project" value="Ensembl"/>
</dbReference>
<dbReference type="GO" id="GO:0019915">
    <property type="term" value="P:lipid storage"/>
    <property type="evidence" value="ECO:0000250"/>
    <property type="project" value="UniProtKB"/>
</dbReference>
<dbReference type="GO" id="GO:0002385">
    <property type="term" value="P:mucosal immune response"/>
    <property type="evidence" value="ECO:0000250"/>
    <property type="project" value="UniProtKB"/>
</dbReference>
<dbReference type="GO" id="GO:0046676">
    <property type="term" value="P:negative regulation of insulin secretion"/>
    <property type="evidence" value="ECO:0007669"/>
    <property type="project" value="Ensembl"/>
</dbReference>
<dbReference type="GO" id="GO:0007200">
    <property type="term" value="P:phospholipase C-activating G protein-coupled receptor signaling pathway"/>
    <property type="evidence" value="ECO:0007669"/>
    <property type="project" value="Ensembl"/>
</dbReference>
<dbReference type="GO" id="GO:0002879">
    <property type="term" value="P:positive regulation of acute inflammatory response to non-antigenic stimulus"/>
    <property type="evidence" value="ECO:0000250"/>
    <property type="project" value="UniProtKB"/>
</dbReference>
<dbReference type="GO" id="GO:0032722">
    <property type="term" value="P:positive regulation of chemokine production"/>
    <property type="evidence" value="ECO:0000250"/>
    <property type="project" value="UniProtKB"/>
</dbReference>
<dbReference type="GO" id="GO:0002720">
    <property type="term" value="P:positive regulation of cytokine production involved in immune response"/>
    <property type="evidence" value="ECO:0000250"/>
    <property type="project" value="UniProtKB"/>
</dbReference>
<dbReference type="GO" id="GO:0032024">
    <property type="term" value="P:positive regulation of insulin secretion"/>
    <property type="evidence" value="ECO:0007669"/>
    <property type="project" value="Ensembl"/>
</dbReference>
<dbReference type="GO" id="GO:0032757">
    <property type="term" value="P:positive regulation of interleukin-8 production"/>
    <property type="evidence" value="ECO:0000315"/>
    <property type="project" value="UniProtKB"/>
</dbReference>
<dbReference type="GO" id="GO:0002673">
    <property type="term" value="P:regulation of acute inflammatory response"/>
    <property type="evidence" value="ECO:0000250"/>
    <property type="project" value="UniProtKB"/>
</dbReference>
<dbReference type="GO" id="GO:0090276">
    <property type="term" value="P:regulation of peptide hormone secretion"/>
    <property type="evidence" value="ECO:0000250"/>
    <property type="project" value="UniProtKB"/>
</dbReference>
<dbReference type="CDD" id="cd15170">
    <property type="entry name" value="7tmA_FFAR2_FFAR3"/>
    <property type="match status" value="1"/>
</dbReference>
<dbReference type="FunFam" id="1.20.1070.10:FF:000173">
    <property type="entry name" value="Free fatty acid receptor 1"/>
    <property type="match status" value="1"/>
</dbReference>
<dbReference type="Gene3D" id="1.20.1070.10">
    <property type="entry name" value="Rhodopsin 7-helix transmembrane proteins"/>
    <property type="match status" value="1"/>
</dbReference>
<dbReference type="InterPro" id="IPR000276">
    <property type="entry name" value="GPCR_Rhodpsn"/>
</dbReference>
<dbReference type="InterPro" id="IPR017452">
    <property type="entry name" value="GPCR_Rhodpsn_7TM"/>
</dbReference>
<dbReference type="InterPro" id="IPR013312">
    <property type="entry name" value="GPR40-rel_orph"/>
</dbReference>
<dbReference type="PANTHER" id="PTHR45822:SF5">
    <property type="entry name" value="FREE FATTY ACID RECEPTOR 2"/>
    <property type="match status" value="1"/>
</dbReference>
<dbReference type="PANTHER" id="PTHR45822">
    <property type="entry name" value="FREE FATTY ACID RECEPTOR 2-RELATED"/>
    <property type="match status" value="1"/>
</dbReference>
<dbReference type="Pfam" id="PF00001">
    <property type="entry name" value="7tm_1"/>
    <property type="match status" value="1"/>
</dbReference>
<dbReference type="PRINTS" id="PR00237">
    <property type="entry name" value="GPCRRHODOPSN"/>
</dbReference>
<dbReference type="PRINTS" id="PR01904">
    <property type="entry name" value="GPR40FAMILY"/>
</dbReference>
<dbReference type="SUPFAM" id="SSF81321">
    <property type="entry name" value="Family A G protein-coupled receptor-like"/>
    <property type="match status" value="1"/>
</dbReference>
<dbReference type="PROSITE" id="PS00237">
    <property type="entry name" value="G_PROTEIN_RECEP_F1_1"/>
    <property type="match status" value="1"/>
</dbReference>
<dbReference type="PROSITE" id="PS50262">
    <property type="entry name" value="G_PROTEIN_RECEP_F1_2"/>
    <property type="match status" value="1"/>
</dbReference>
<gene>
    <name type="primary">FFAR2</name>
    <name type="synonym">FFA2</name>
    <name type="synonym">GPCR43</name>
    <name type="synonym">GPR43</name>
</gene>
<evidence type="ECO:0000255" key="1"/>
<evidence type="ECO:0000255" key="2">
    <source>
        <dbReference type="PROSITE-ProRule" id="PRU00521"/>
    </source>
</evidence>
<evidence type="ECO:0000256" key="3">
    <source>
        <dbReference type="SAM" id="MobiDB-lite"/>
    </source>
</evidence>
<evidence type="ECO:0000269" key="4">
    <source>
    </source>
</evidence>
<evidence type="ECO:0000269" key="5">
    <source>
    </source>
</evidence>
<evidence type="ECO:0000269" key="6">
    <source>
    </source>
</evidence>
<evidence type="ECO:0000269" key="7">
    <source>
    </source>
</evidence>
<evidence type="ECO:0000269" key="8">
    <source>
    </source>
</evidence>
<evidence type="ECO:0000269" key="9">
    <source>
    </source>
</evidence>
<evidence type="ECO:0000269" key="10">
    <source>
    </source>
</evidence>
<evidence type="ECO:0000269" key="11">
    <source>
    </source>
</evidence>
<evidence type="ECO:0000269" key="12">
    <source>
    </source>
</evidence>
<evidence type="ECO:0000305" key="13"/>
<evidence type="ECO:0007829" key="14">
    <source>
        <dbReference type="PDB" id="8J22"/>
    </source>
</evidence>
<evidence type="ECO:0007829" key="15">
    <source>
        <dbReference type="PDB" id="8J23"/>
    </source>
</evidence>
<evidence type="ECO:0007829" key="16">
    <source>
        <dbReference type="PDB" id="8J24"/>
    </source>
</evidence>
<protein>
    <recommendedName>
        <fullName>Free fatty acid receptor 2</fullName>
    </recommendedName>
    <alternativeName>
        <fullName>G-protein coupled receptor 43</fullName>
    </alternativeName>
</protein>
<name>FFAR2_HUMAN</name>
<reference key="1">
    <citation type="journal article" date="1997" name="Biochem. Biophys. Res. Commun.">
        <title>A cluster of four novel human G protein-coupled receptor genes occurring in close proximity to CD22 gene on chromosome 19q13.1.</title>
        <authorList>
            <person name="Sawzdargo M."/>
            <person name="George S.R."/>
            <person name="Nguyen T."/>
            <person name="Xu S."/>
            <person name="Kolakowski L.F. Jr."/>
            <person name="O'Dowd B.F."/>
        </authorList>
    </citation>
    <scope>NUCLEOTIDE SEQUENCE [GENOMIC DNA]</scope>
</reference>
<reference key="2">
    <citation type="journal article" date="2004" name="Nature">
        <title>The DNA sequence and biology of human chromosome 19.</title>
        <authorList>
            <person name="Grimwood J."/>
            <person name="Gordon L.A."/>
            <person name="Olsen A.S."/>
            <person name="Terry A."/>
            <person name="Schmutz J."/>
            <person name="Lamerdin J.E."/>
            <person name="Hellsten U."/>
            <person name="Goodstein D."/>
            <person name="Couronne O."/>
            <person name="Tran-Gyamfi M."/>
            <person name="Aerts A."/>
            <person name="Altherr M."/>
            <person name="Ashworth L."/>
            <person name="Bajorek E."/>
            <person name="Black S."/>
            <person name="Branscomb E."/>
            <person name="Caenepeel S."/>
            <person name="Carrano A.V."/>
            <person name="Caoile C."/>
            <person name="Chan Y.M."/>
            <person name="Christensen M."/>
            <person name="Cleland C.A."/>
            <person name="Copeland A."/>
            <person name="Dalin E."/>
            <person name="Dehal P."/>
            <person name="Denys M."/>
            <person name="Detter J.C."/>
            <person name="Escobar J."/>
            <person name="Flowers D."/>
            <person name="Fotopulos D."/>
            <person name="Garcia C."/>
            <person name="Georgescu A.M."/>
            <person name="Glavina T."/>
            <person name="Gomez M."/>
            <person name="Gonzales E."/>
            <person name="Groza M."/>
            <person name="Hammon N."/>
            <person name="Hawkins T."/>
            <person name="Haydu L."/>
            <person name="Ho I."/>
            <person name="Huang W."/>
            <person name="Israni S."/>
            <person name="Jett J."/>
            <person name="Kadner K."/>
            <person name="Kimball H."/>
            <person name="Kobayashi A."/>
            <person name="Larionov V."/>
            <person name="Leem S.-H."/>
            <person name="Lopez F."/>
            <person name="Lou Y."/>
            <person name="Lowry S."/>
            <person name="Malfatti S."/>
            <person name="Martinez D."/>
            <person name="McCready P.M."/>
            <person name="Medina C."/>
            <person name="Morgan J."/>
            <person name="Nelson K."/>
            <person name="Nolan M."/>
            <person name="Ovcharenko I."/>
            <person name="Pitluck S."/>
            <person name="Pollard M."/>
            <person name="Popkie A.P."/>
            <person name="Predki P."/>
            <person name="Quan G."/>
            <person name="Ramirez L."/>
            <person name="Rash S."/>
            <person name="Retterer J."/>
            <person name="Rodriguez A."/>
            <person name="Rogers S."/>
            <person name="Salamov A."/>
            <person name="Salazar A."/>
            <person name="She X."/>
            <person name="Smith D."/>
            <person name="Slezak T."/>
            <person name="Solovyev V."/>
            <person name="Thayer N."/>
            <person name="Tice H."/>
            <person name="Tsai M."/>
            <person name="Ustaszewska A."/>
            <person name="Vo N."/>
            <person name="Wagner M."/>
            <person name="Wheeler J."/>
            <person name="Wu K."/>
            <person name="Xie G."/>
            <person name="Yang J."/>
            <person name="Dubchak I."/>
            <person name="Furey T.S."/>
            <person name="DeJong P."/>
            <person name="Dickson M."/>
            <person name="Gordon D."/>
            <person name="Eichler E.E."/>
            <person name="Pennacchio L.A."/>
            <person name="Richardson P."/>
            <person name="Stubbs L."/>
            <person name="Rokhsar D.S."/>
            <person name="Myers R.M."/>
            <person name="Rubin E.M."/>
            <person name="Lucas S.M."/>
        </authorList>
    </citation>
    <scope>NUCLEOTIDE SEQUENCE [LARGE SCALE GENOMIC DNA]</scope>
</reference>
<reference key="3">
    <citation type="submission" date="2007-12" db="EMBL/GenBank/DDBJ databases">
        <authorList>
            <person name="Kaighin V.A."/>
            <person name="Martin A.L."/>
            <person name="Aronstam R.S."/>
        </authorList>
    </citation>
    <scope>NUCLEOTIDE SEQUENCE [GENOMIC DNA]</scope>
</reference>
<reference key="4">
    <citation type="journal article" date="2004" name="Genome Res.">
        <title>The status, quality, and expansion of the NIH full-length cDNA project: the Mammalian Gene Collection (MGC).</title>
        <authorList>
            <consortium name="The MGC Project Team"/>
        </authorList>
    </citation>
    <scope>NUCLEOTIDE SEQUENCE [LARGE SCALE MRNA]</scope>
</reference>
<reference key="5">
    <citation type="journal article" date="2003" name="Biochem. Biophys. Res. Commun.">
        <title>Identification of a free fatty acid receptor, FFA2R, expressed on leukocytes and activated by short-chain fatty acids.</title>
        <authorList>
            <person name="Nilsson N.E."/>
            <person name="Kotarsky K."/>
            <person name="Owman C."/>
            <person name="Olde B."/>
        </authorList>
    </citation>
    <scope>FUNCTION</scope>
    <scope>TISSUE SPECIFICITY</scope>
</reference>
<reference key="6">
    <citation type="journal article" date="2003" name="J. Biol. Chem.">
        <title>The orphan G protein-coupled receptors GPR41 and GPR43 are activated by propionate and other short chain carboxylic acids.</title>
        <authorList>
            <person name="Brown A.J."/>
            <person name="Goldsworthy S.M."/>
            <person name="Barnes A.A."/>
            <person name="Eilert M.M."/>
            <person name="Tcheang L."/>
            <person name="Daniels D."/>
            <person name="Muir A.I."/>
            <person name="Wigglesworth M.J."/>
            <person name="Kinghorn I."/>
            <person name="Fraser N.J."/>
            <person name="Pike N.B."/>
            <person name="Strum J.C."/>
            <person name="Steplewski K.M."/>
            <person name="Murdock P.R."/>
            <person name="Holder J.C."/>
            <person name="Marshall F.H."/>
            <person name="Szekeres P.G."/>
            <person name="Wilson S."/>
            <person name="Ignar D.M."/>
            <person name="Foord S.M."/>
            <person name="Wise A."/>
            <person name="Dowell S.J."/>
        </authorList>
    </citation>
    <scope>FUNCTION</scope>
    <scope>TISSUE SPECIFICITY</scope>
</reference>
<reference key="7">
    <citation type="journal article" date="2003" name="J. Biol. Chem.">
        <title>Functional characterization of human receptors for short chain fatty acids and their role in polymorphonuclear cell activation.</title>
        <authorList>
            <person name="Le Poul E."/>
            <person name="Loison C."/>
            <person name="Struyf S."/>
            <person name="Springael J.Y."/>
            <person name="Lannoy V."/>
            <person name="Decobecq M.E."/>
            <person name="Brezillon S."/>
            <person name="Dupriez V."/>
            <person name="Vassart G."/>
            <person name="Van Damme J."/>
            <person name="Parmentier M."/>
            <person name="Detheux M."/>
        </authorList>
    </citation>
    <scope>FUNCTION</scope>
</reference>
<reference key="8">
    <citation type="journal article" date="2008" name="J. Biol. Chem.">
        <title>Conserved polar residues in transmembrane domains V, VI, and VII of free fatty acid receptor 2 and free fatty acid receptor 3 are required for the binding and function of short chain fatty acids.</title>
        <authorList>
            <person name="Stoddart L.A."/>
            <person name="Smith N.J."/>
            <person name="Jenkins L."/>
            <person name="Brown A.J."/>
            <person name="Milligan G."/>
        </authorList>
    </citation>
    <scope>FUNCTION</scope>
    <scope>SUBCELLULAR LOCATION</scope>
    <scope>MUTAGENESIS OF HIS-140; ARG-180; HIS-242 AND ARG-255</scope>
</reference>
<reference key="9">
    <citation type="journal article" date="2010" name="FEBS Lett.">
        <title>Allosteric rescuing of loss-of-function FFAR2 mutations.</title>
        <authorList>
            <person name="Swaminath G."/>
            <person name="Jaeckel P."/>
            <person name="Guo Q."/>
            <person name="Cardozo M."/>
            <person name="Weiszmann J."/>
            <person name="Lindberg R."/>
            <person name="Wang Y."/>
            <person name="Schwandner R."/>
            <person name="Li Y."/>
        </authorList>
    </citation>
    <scope>MUTAGENESIS OF GLU-106; TYR-108; ARG-180 AND ARG-255</scope>
</reference>
<reference key="10">
    <citation type="journal article" date="2010" name="J. Immunol.">
        <title>Secreted M-ficolin anchors onto monocyte transmembrane G protein-coupled receptor 43 and cross talks with plasma C-reactive protein to mediate immune signaling and regulate host defense.</title>
        <authorList>
            <person name="Zhang J."/>
            <person name="Yang L."/>
            <person name="Ang Z."/>
            <person name="Yoong S.L."/>
            <person name="Tran T.T."/>
            <person name="Anand G.S."/>
            <person name="Tan N.S."/>
            <person name="Ho B."/>
            <person name="Ding J.L."/>
        </authorList>
    </citation>
    <scope>FUNCTION</scope>
    <scope>INTERACTION WITH FCN1</scope>
</reference>
<reference key="11">
    <citation type="journal article" date="2011" name="Biochem. Biophys. Res. Commun.">
        <title>Mutational analysis of G-protein coupled receptor--FFA2.</title>
        <authorList>
            <person name="Swaminath G."/>
            <person name="Jaeckel P."/>
            <person name="Guo Q."/>
            <person name="Cardozo M."/>
            <person name="Weiszmann J."/>
            <person name="Lindberg R."/>
            <person name="Wang Y."/>
            <person name="Schwandner R."/>
            <person name="Li Y."/>
        </authorList>
    </citation>
    <scope>MUTAGENESIS OF TYR-90; ASN-239 AND HIS-242</scope>
</reference>
<reference key="12">
    <citation type="journal article" date="2012" name="J. Biol. Chem.">
        <title>Extracellular ionic locks determine variation in constitutive activity and ligand potency between species orthologs of the free fatty acid receptors FFA2 and FFA3.</title>
        <authorList>
            <person name="Hudson B.D."/>
            <person name="Tikhonova I.G."/>
            <person name="Pandey S.K."/>
            <person name="Ulven T."/>
            <person name="Milligan G."/>
        </authorList>
    </citation>
    <scope>MUTAGENESIS OF GLY-159</scope>
</reference>
<reference key="13">
    <citation type="journal article" date="2013" name="J. Biol. Chem.">
        <title>Defining the molecular basis for the first potent and selective orthosteric agonists of the FFA2 free fatty acid receptor.</title>
        <authorList>
            <person name="Hudson B.D."/>
            <person name="Due-Hansen M.E."/>
            <person name="Christiansen E."/>
            <person name="Hansen A.M."/>
            <person name="Mackenzie A.E."/>
            <person name="Murdoch H."/>
            <person name="Pandey S.K."/>
            <person name="Ward R.J."/>
            <person name="Marquez R."/>
            <person name="Tikhonova I.G."/>
            <person name="Ulven T."/>
            <person name="Milligan G."/>
        </authorList>
    </citation>
    <scope>FUNCTION</scope>
    <scope>MUTAGENESIS OF TYR-90; HIS-140; GLN-148; TYR-165; ARG-180; TYR-238; HIS-242 AND ARG-255</scope>
</reference>
<sequence length="330" mass="37144">MLPDWKSSLILMAYIIIFLTGLPANLLALRAFVGRIRQPQPAPVHILLLSLTLADLLLLLLLPFKIIEAASNFRWYLPKVVCALTSFGFYSSIYCSTWLLAGISIERYLGVAFPVQYKLSRRPLYGVIAALVAWVMSFGHCTIVIIVQYLNTTEQVRSGNEITCYENFTDNQLDVVLPVRLELCLVLFFIPMAVTIFCYWRFVWIMLSQPLVGAQRRRRAVGLAVVTLLNFLVCFGPYNVSHLVGYHQRKSPWWRSIAVVFSSLNASLDPLLFYFSSSVVRRAFGRGLQVLRNQGSSLLGRRGKDTAEGTNEDRGVGQGEGMPSSDFTTE</sequence>
<keyword id="KW-0002">3D-structure</keyword>
<keyword id="KW-1003">Cell membrane</keyword>
<keyword id="KW-0297">G-protein coupled receptor</keyword>
<keyword id="KW-0325">Glycoprotein</keyword>
<keyword id="KW-0391">Immunity</keyword>
<keyword id="KW-0395">Inflammatory response</keyword>
<keyword id="KW-0446">Lipid-binding</keyword>
<keyword id="KW-0472">Membrane</keyword>
<keyword id="KW-1267">Proteomics identification</keyword>
<keyword id="KW-0675">Receptor</keyword>
<keyword id="KW-1185">Reference proteome</keyword>
<keyword id="KW-0807">Transducer</keyword>
<keyword id="KW-0812">Transmembrane</keyword>
<keyword id="KW-1133">Transmembrane helix</keyword>
<feature type="chain" id="PRO_0000069571" description="Free fatty acid receptor 2">
    <location>
        <begin position="1"/>
        <end position="330"/>
    </location>
</feature>
<feature type="topological domain" description="Extracellular" evidence="1">
    <location>
        <begin position="1"/>
        <end position="12"/>
    </location>
</feature>
<feature type="transmembrane region" description="Helical; Name=1" evidence="1">
    <location>
        <begin position="13"/>
        <end position="33"/>
    </location>
</feature>
<feature type="topological domain" description="Cytoplasmic">
    <location>
        <begin position="34"/>
        <end position="41"/>
    </location>
</feature>
<feature type="transmembrane region" description="Helical; Name=2" evidence="1">
    <location>
        <begin position="42"/>
        <end position="62"/>
    </location>
</feature>
<feature type="topological domain" description="Extracellular" evidence="1">
    <location>
        <begin position="63"/>
        <end position="84"/>
    </location>
</feature>
<feature type="transmembrane region" description="Helical; Name=3" evidence="1">
    <location>
        <begin position="85"/>
        <end position="105"/>
    </location>
</feature>
<feature type="topological domain" description="Cytoplasmic" evidence="1">
    <location>
        <begin position="106"/>
        <end position="126"/>
    </location>
</feature>
<feature type="transmembrane region" description="Helical; Name=4" evidence="1">
    <location>
        <begin position="127"/>
        <end position="147"/>
    </location>
</feature>
<feature type="topological domain" description="Extracellular" evidence="1">
    <location>
        <begin position="148"/>
        <end position="173"/>
    </location>
</feature>
<feature type="transmembrane region" description="Helical; Name=5" evidence="1">
    <location>
        <begin position="174"/>
        <end position="194"/>
    </location>
</feature>
<feature type="topological domain" description="Cytoplasmic" evidence="1">
    <location>
        <begin position="195"/>
        <end position="219"/>
    </location>
</feature>
<feature type="transmembrane region" description="Helical; Name=6" evidence="1">
    <location>
        <begin position="220"/>
        <end position="240"/>
    </location>
</feature>
<feature type="topological domain" description="Extracellular" evidence="1">
    <location>
        <begin position="241"/>
        <end position="255"/>
    </location>
</feature>
<feature type="transmembrane region" description="Helical; Name=7" evidence="1">
    <location>
        <begin position="256"/>
        <end position="276"/>
    </location>
</feature>
<feature type="topological domain" description="Cytoplasmic" evidence="1">
    <location>
        <begin position="277"/>
        <end position="330"/>
    </location>
</feature>
<feature type="region of interest" description="Disordered" evidence="3">
    <location>
        <begin position="299"/>
        <end position="330"/>
    </location>
</feature>
<feature type="compositionally biased region" description="Basic and acidic residues" evidence="3">
    <location>
        <begin position="302"/>
        <end position="315"/>
    </location>
</feature>
<feature type="glycosylation site" description="N-linked (GlcNAc...) asparagine" evidence="1">
    <location>
        <position position="151"/>
    </location>
</feature>
<feature type="glycosylation site" description="N-linked (GlcNAc...) asparagine" evidence="1">
    <location>
        <position position="167"/>
    </location>
</feature>
<feature type="sequence variant" id="VAR_011861" description="In dbSNP:rs409093.">
    <original>L</original>
    <variation>H</variation>
    <location>
        <position position="211"/>
    </location>
</feature>
<feature type="mutagenesis site" description="Partial loss of propionate-induced G protein-coupled receptor activity." evidence="10 12">
    <original>Y</original>
    <variation>A</variation>
    <location>
        <position position="90"/>
    </location>
</feature>
<feature type="mutagenesis site" description="Complete loss of acetate-induced G protein-coupled receptor activity." evidence="10 12">
    <original>Y</original>
    <variation>W</variation>
    <location>
        <position position="90"/>
    </location>
</feature>
<feature type="mutagenesis site" description="Partial loss of SCFA-induced G protein-coupled receptor activity." evidence="8">
    <original>E</original>
    <variation>A</variation>
    <location>
        <position position="106"/>
    </location>
</feature>
<feature type="mutagenesis site" description="Complete loss of SCFA-induced G protein-coupled receptor activity." evidence="8">
    <original>Y</original>
    <variation>A</variation>
    <location>
        <position position="108"/>
    </location>
</feature>
<feature type="mutagenesis site" description="Partial loss of SCFA-induced G protein-coupled receptor activity." evidence="7 12">
    <original>H</original>
    <variation>A</variation>
    <location>
        <position position="140"/>
    </location>
</feature>
<feature type="mutagenesis site" description="No effect on SCFA-induced G protein-coupled receptor activity." evidence="12">
    <original>Q</original>
    <variation>A</variation>
    <location>
        <position position="148"/>
    </location>
</feature>
<feature type="mutagenesis site" description="Partial loss of SCFA-induced G protein-coupled receptor activity." evidence="12">
    <original>Q</original>
    <variation>E</variation>
    <location>
        <position position="148"/>
    </location>
</feature>
<feature type="mutagenesis site" description="Partial loss of SCFA-independent constitutive G protein-coupled receptor activity." evidence="11">
    <original>G</original>
    <variation>E</variation>
    <location>
        <position position="159"/>
    </location>
</feature>
<feature type="mutagenesis site" description="Partial loss of propionate-induced G protein-coupled receptor activity." evidence="12">
    <original>Y</original>
    <variation>A</variation>
    <location>
        <position position="165"/>
    </location>
</feature>
<feature type="mutagenesis site" description="Complete loss of SCFA-induced G protein-coupled receptor activity." evidence="7 8 12">
    <original>R</original>
    <variation>A</variation>
    <variation>K</variation>
    <variation>L</variation>
    <variation>S</variation>
    <location>
        <position position="180"/>
    </location>
</feature>
<feature type="mutagenesis site" description="Partial loss of propionate-induced G protein-coupled receptor activity." evidence="12">
    <original>Y</original>
    <variation>A</variation>
    <location>
        <position position="238"/>
    </location>
</feature>
<feature type="mutagenesis site" description="Complete loss of acetate-induced G protein-coupled receptor activity." evidence="10">
    <original>N</original>
    <variation>A</variation>
    <location>
        <position position="239"/>
    </location>
</feature>
<feature type="mutagenesis site" description="Complete loss of SCFA-induced G protein-coupled receptor activity." evidence="7 10 12">
    <original>H</original>
    <variation>A</variation>
    <variation>F</variation>
    <location>
        <position position="242"/>
    </location>
</feature>
<feature type="mutagenesis site" description="Complete loss of SCFA-induced G protein-coupled receptor activity." evidence="7 8 12">
    <original>R</original>
    <variation>A</variation>
    <location>
        <position position="255"/>
    </location>
</feature>
<feature type="sequence conflict" description="In Ref. 4; AAH96201." evidence="13" ref="4">
    <original>T</original>
    <variation>M</variation>
    <location>
        <position position="227"/>
    </location>
</feature>
<feature type="helix" evidence="16">
    <location>
        <begin position="5"/>
        <end position="37"/>
    </location>
</feature>
<feature type="strand" evidence="16">
    <location>
        <begin position="38"/>
        <end position="40"/>
    </location>
</feature>
<feature type="helix" evidence="16">
    <location>
        <begin position="43"/>
        <end position="60"/>
    </location>
</feature>
<feature type="helix" evidence="16">
    <location>
        <begin position="62"/>
        <end position="70"/>
    </location>
</feature>
<feature type="helix" evidence="16">
    <location>
        <begin position="79"/>
        <end position="112"/>
    </location>
</feature>
<feature type="helix" evidence="16">
    <location>
        <begin position="114"/>
        <end position="120"/>
    </location>
</feature>
<feature type="helix" evidence="16">
    <location>
        <begin position="123"/>
        <end position="140"/>
    </location>
</feature>
<feature type="helix" evidence="16">
    <location>
        <begin position="143"/>
        <end position="147"/>
    </location>
</feature>
<feature type="strand" evidence="14">
    <location>
        <begin position="152"/>
        <end position="154"/>
    </location>
</feature>
<feature type="turn" evidence="15">
    <location>
        <begin position="170"/>
        <end position="172"/>
    </location>
</feature>
<feature type="helix" evidence="16">
    <location>
        <begin position="173"/>
        <end position="187"/>
    </location>
</feature>
<feature type="helix" evidence="16">
    <location>
        <begin position="189"/>
        <end position="208"/>
    </location>
</feature>
<feature type="helix" evidence="16">
    <location>
        <begin position="214"/>
        <end position="248"/>
    </location>
</feature>
<feature type="helix" evidence="16">
    <location>
        <begin position="255"/>
        <end position="272"/>
    </location>
</feature>
<feature type="helix" evidence="14">
    <location>
        <begin position="277"/>
        <end position="290"/>
    </location>
</feature>